<reference key="1">
    <citation type="journal article" date="2007" name="Genome Res.">
        <title>Lateral gene transfer between obligate intracellular bacteria: evidence from the Rickettsia massiliae genome.</title>
        <authorList>
            <person name="Blanc G."/>
            <person name="Ogata H."/>
            <person name="Robert C."/>
            <person name="Audic S."/>
            <person name="Claverie J.-M."/>
            <person name="Raoult D."/>
        </authorList>
    </citation>
    <scope>NUCLEOTIDE SEQUENCE [LARGE SCALE GENOMIC DNA]</scope>
    <source>
        <strain>Mtu5</strain>
    </source>
</reference>
<protein>
    <recommendedName>
        <fullName evidence="1">Holliday junction branch migration complex subunit RuvB</fullName>
        <ecNumber evidence="1">3.6.4.-</ecNumber>
    </recommendedName>
</protein>
<feature type="chain" id="PRO_0000322837" description="Holliday junction branch migration complex subunit RuvB">
    <location>
        <begin position="1"/>
        <end position="353"/>
    </location>
</feature>
<feature type="region of interest" description="Large ATPase domain (RuvB-L)" evidence="1">
    <location>
        <begin position="4"/>
        <end position="190"/>
    </location>
</feature>
<feature type="region of interest" description="Small ATPAse domain (RuvB-S)" evidence="1">
    <location>
        <begin position="191"/>
        <end position="261"/>
    </location>
</feature>
<feature type="region of interest" description="Head domain (RuvB-H)" evidence="1">
    <location>
        <begin position="264"/>
        <end position="353"/>
    </location>
</feature>
<feature type="binding site" evidence="1">
    <location>
        <position position="29"/>
    </location>
    <ligand>
        <name>ATP</name>
        <dbReference type="ChEBI" id="CHEBI:30616"/>
    </ligand>
</feature>
<feature type="binding site" evidence="1">
    <location>
        <position position="30"/>
    </location>
    <ligand>
        <name>ATP</name>
        <dbReference type="ChEBI" id="CHEBI:30616"/>
    </ligand>
</feature>
<feature type="binding site" evidence="1">
    <location>
        <position position="71"/>
    </location>
    <ligand>
        <name>ATP</name>
        <dbReference type="ChEBI" id="CHEBI:30616"/>
    </ligand>
</feature>
<feature type="binding site" evidence="1">
    <location>
        <position position="74"/>
    </location>
    <ligand>
        <name>ATP</name>
        <dbReference type="ChEBI" id="CHEBI:30616"/>
    </ligand>
</feature>
<feature type="binding site" evidence="1">
    <location>
        <position position="75"/>
    </location>
    <ligand>
        <name>ATP</name>
        <dbReference type="ChEBI" id="CHEBI:30616"/>
    </ligand>
</feature>
<feature type="binding site" evidence="1">
    <location>
        <position position="75"/>
    </location>
    <ligand>
        <name>Mg(2+)</name>
        <dbReference type="ChEBI" id="CHEBI:18420"/>
    </ligand>
</feature>
<feature type="binding site" evidence="1">
    <location>
        <position position="76"/>
    </location>
    <ligand>
        <name>ATP</name>
        <dbReference type="ChEBI" id="CHEBI:30616"/>
    </ligand>
</feature>
<feature type="binding site" evidence="1">
    <location>
        <begin position="137"/>
        <end position="139"/>
    </location>
    <ligand>
        <name>ATP</name>
        <dbReference type="ChEBI" id="CHEBI:30616"/>
    </ligand>
</feature>
<feature type="binding site" evidence="1">
    <location>
        <position position="180"/>
    </location>
    <ligand>
        <name>ATP</name>
        <dbReference type="ChEBI" id="CHEBI:30616"/>
    </ligand>
</feature>
<feature type="binding site" evidence="1">
    <location>
        <position position="190"/>
    </location>
    <ligand>
        <name>ATP</name>
        <dbReference type="ChEBI" id="CHEBI:30616"/>
    </ligand>
</feature>
<feature type="binding site" evidence="1">
    <location>
        <position position="227"/>
    </location>
    <ligand>
        <name>ATP</name>
        <dbReference type="ChEBI" id="CHEBI:30616"/>
    </ligand>
</feature>
<feature type="binding site" evidence="1">
    <location>
        <position position="300"/>
    </location>
    <ligand>
        <name>DNA</name>
        <dbReference type="ChEBI" id="CHEBI:16991"/>
    </ligand>
</feature>
<feature type="binding site" evidence="1">
    <location>
        <position position="319"/>
    </location>
    <ligand>
        <name>DNA</name>
        <dbReference type="ChEBI" id="CHEBI:16991"/>
    </ligand>
</feature>
<feature type="binding site" evidence="1">
    <location>
        <position position="324"/>
    </location>
    <ligand>
        <name>DNA</name>
        <dbReference type="ChEBI" id="CHEBI:16991"/>
    </ligand>
</feature>
<organism>
    <name type="scientific">Rickettsia massiliae (strain Mtu5)</name>
    <dbReference type="NCBI Taxonomy" id="416276"/>
    <lineage>
        <taxon>Bacteria</taxon>
        <taxon>Pseudomonadati</taxon>
        <taxon>Pseudomonadota</taxon>
        <taxon>Alphaproteobacteria</taxon>
        <taxon>Rickettsiales</taxon>
        <taxon>Rickettsiaceae</taxon>
        <taxon>Rickettsieae</taxon>
        <taxon>Rickettsia</taxon>
        <taxon>spotted fever group</taxon>
    </lineage>
</organism>
<proteinExistence type="inferred from homology"/>
<dbReference type="EC" id="3.6.4.-" evidence="1"/>
<dbReference type="EMBL" id="CP000683">
    <property type="protein sequence ID" value="ABV84743.1"/>
    <property type="molecule type" value="Genomic_DNA"/>
</dbReference>
<dbReference type="SMR" id="A8F1F7"/>
<dbReference type="KEGG" id="rms:RMA_0550"/>
<dbReference type="HOGENOM" id="CLU_055599_1_0_5"/>
<dbReference type="Proteomes" id="UP000001311">
    <property type="component" value="Chromosome"/>
</dbReference>
<dbReference type="GO" id="GO:0005737">
    <property type="term" value="C:cytoplasm"/>
    <property type="evidence" value="ECO:0007669"/>
    <property type="project" value="UniProtKB-SubCell"/>
</dbReference>
<dbReference type="GO" id="GO:0048476">
    <property type="term" value="C:Holliday junction resolvase complex"/>
    <property type="evidence" value="ECO:0007669"/>
    <property type="project" value="UniProtKB-UniRule"/>
</dbReference>
<dbReference type="GO" id="GO:0005524">
    <property type="term" value="F:ATP binding"/>
    <property type="evidence" value="ECO:0007669"/>
    <property type="project" value="UniProtKB-UniRule"/>
</dbReference>
<dbReference type="GO" id="GO:0016887">
    <property type="term" value="F:ATP hydrolysis activity"/>
    <property type="evidence" value="ECO:0007669"/>
    <property type="project" value="InterPro"/>
</dbReference>
<dbReference type="GO" id="GO:0000400">
    <property type="term" value="F:four-way junction DNA binding"/>
    <property type="evidence" value="ECO:0007669"/>
    <property type="project" value="UniProtKB-UniRule"/>
</dbReference>
<dbReference type="GO" id="GO:0009378">
    <property type="term" value="F:four-way junction helicase activity"/>
    <property type="evidence" value="ECO:0007669"/>
    <property type="project" value="InterPro"/>
</dbReference>
<dbReference type="GO" id="GO:0006310">
    <property type="term" value="P:DNA recombination"/>
    <property type="evidence" value="ECO:0007669"/>
    <property type="project" value="UniProtKB-UniRule"/>
</dbReference>
<dbReference type="GO" id="GO:0006281">
    <property type="term" value="P:DNA repair"/>
    <property type="evidence" value="ECO:0007669"/>
    <property type="project" value="UniProtKB-UniRule"/>
</dbReference>
<dbReference type="CDD" id="cd00009">
    <property type="entry name" value="AAA"/>
    <property type="match status" value="1"/>
</dbReference>
<dbReference type="Gene3D" id="1.10.8.60">
    <property type="match status" value="1"/>
</dbReference>
<dbReference type="Gene3D" id="3.40.50.300">
    <property type="entry name" value="P-loop containing nucleotide triphosphate hydrolases"/>
    <property type="match status" value="1"/>
</dbReference>
<dbReference type="Gene3D" id="1.10.10.10">
    <property type="entry name" value="Winged helix-like DNA-binding domain superfamily/Winged helix DNA-binding domain"/>
    <property type="match status" value="1"/>
</dbReference>
<dbReference type="HAMAP" id="MF_00016">
    <property type="entry name" value="DNA_HJ_migration_RuvB"/>
    <property type="match status" value="1"/>
</dbReference>
<dbReference type="InterPro" id="IPR003593">
    <property type="entry name" value="AAA+_ATPase"/>
</dbReference>
<dbReference type="InterPro" id="IPR041445">
    <property type="entry name" value="AAA_lid_4"/>
</dbReference>
<dbReference type="InterPro" id="IPR004605">
    <property type="entry name" value="DNA_helicase_Holl-junc_RuvB"/>
</dbReference>
<dbReference type="InterPro" id="IPR027417">
    <property type="entry name" value="P-loop_NTPase"/>
</dbReference>
<dbReference type="InterPro" id="IPR008824">
    <property type="entry name" value="RuvB-like_N"/>
</dbReference>
<dbReference type="InterPro" id="IPR008823">
    <property type="entry name" value="RuvB_C"/>
</dbReference>
<dbReference type="InterPro" id="IPR036388">
    <property type="entry name" value="WH-like_DNA-bd_sf"/>
</dbReference>
<dbReference type="InterPro" id="IPR036390">
    <property type="entry name" value="WH_DNA-bd_sf"/>
</dbReference>
<dbReference type="NCBIfam" id="NF000868">
    <property type="entry name" value="PRK00080.1"/>
    <property type="match status" value="1"/>
</dbReference>
<dbReference type="NCBIfam" id="TIGR00635">
    <property type="entry name" value="ruvB"/>
    <property type="match status" value="1"/>
</dbReference>
<dbReference type="PANTHER" id="PTHR42848">
    <property type="match status" value="1"/>
</dbReference>
<dbReference type="PANTHER" id="PTHR42848:SF1">
    <property type="entry name" value="HOLLIDAY JUNCTION BRANCH MIGRATION COMPLEX SUBUNIT RUVB"/>
    <property type="match status" value="1"/>
</dbReference>
<dbReference type="Pfam" id="PF17864">
    <property type="entry name" value="AAA_lid_4"/>
    <property type="match status" value="1"/>
</dbReference>
<dbReference type="Pfam" id="PF05491">
    <property type="entry name" value="RuvB_C"/>
    <property type="match status" value="1"/>
</dbReference>
<dbReference type="Pfam" id="PF05496">
    <property type="entry name" value="RuvB_N"/>
    <property type="match status" value="1"/>
</dbReference>
<dbReference type="SMART" id="SM00382">
    <property type="entry name" value="AAA"/>
    <property type="match status" value="1"/>
</dbReference>
<dbReference type="SUPFAM" id="SSF52540">
    <property type="entry name" value="P-loop containing nucleoside triphosphate hydrolases"/>
    <property type="match status" value="1"/>
</dbReference>
<dbReference type="SUPFAM" id="SSF46785">
    <property type="entry name" value="Winged helix' DNA-binding domain"/>
    <property type="match status" value="1"/>
</dbReference>
<comment type="function">
    <text evidence="1">The RuvA-RuvB-RuvC complex processes Holliday junction (HJ) DNA during genetic recombination and DNA repair, while the RuvA-RuvB complex plays an important role in the rescue of blocked DNA replication forks via replication fork reversal (RFR). RuvA specifically binds to HJ cruciform DNA, conferring on it an open structure. The RuvB hexamer acts as an ATP-dependent pump, pulling dsDNA into and through the RuvAB complex. RuvB forms 2 homohexamers on either side of HJ DNA bound by 1 or 2 RuvA tetramers; 4 subunits per hexamer contact DNA at a time. Coordinated motions by a converter formed by DNA-disengaged RuvB subunits stimulates ATP hydrolysis and nucleotide exchange. Immobilization of the converter enables RuvB to convert the ATP-contained energy into a lever motion, pulling 2 nucleotides of DNA out of the RuvA tetramer per ATP hydrolyzed, thus driving DNA branch migration. The RuvB motors rotate together with the DNA substrate, which together with the progressing nucleotide cycle form the mechanistic basis for DNA recombination by continuous HJ branch migration. Branch migration allows RuvC to scan DNA until it finds its consensus sequence, where it cleaves and resolves cruciform DNA.</text>
</comment>
<comment type="catalytic activity">
    <reaction evidence="1">
        <text>ATP + H2O = ADP + phosphate + H(+)</text>
        <dbReference type="Rhea" id="RHEA:13065"/>
        <dbReference type="ChEBI" id="CHEBI:15377"/>
        <dbReference type="ChEBI" id="CHEBI:15378"/>
        <dbReference type="ChEBI" id="CHEBI:30616"/>
        <dbReference type="ChEBI" id="CHEBI:43474"/>
        <dbReference type="ChEBI" id="CHEBI:456216"/>
    </reaction>
</comment>
<comment type="subunit">
    <text evidence="1">Homohexamer. Forms an RuvA(8)-RuvB(12)-Holliday junction (HJ) complex. HJ DNA is sandwiched between 2 RuvA tetramers; dsDNA enters through RuvA and exits via RuvB. An RuvB hexamer assembles on each DNA strand where it exits the tetramer. Each RuvB hexamer is contacted by two RuvA subunits (via domain III) on 2 adjacent RuvB subunits; this complex drives branch migration. In the full resolvosome a probable DNA-RuvA(4)-RuvB(12)-RuvC(2) complex forms which resolves the HJ.</text>
</comment>
<comment type="subcellular location">
    <subcellularLocation>
        <location evidence="1">Cytoplasm</location>
    </subcellularLocation>
</comment>
<comment type="domain">
    <text evidence="1">Has 3 domains, the large (RuvB-L) and small ATPase (RuvB-S) domains and the C-terminal head (RuvB-H) domain. The head domain binds DNA, while the ATPase domains jointly bind ATP, ADP or are empty depending on the state of the subunit in the translocation cycle. During a single DNA translocation step the structure of each domain remains the same, but their relative positions change.</text>
</comment>
<comment type="similarity">
    <text evidence="1">Belongs to the RuvB family.</text>
</comment>
<sequence>MISHYIRFKIMTNILLSPEKSENDQELPIRPSYLQEFVGQQQIKENLSVFIKAAKSRNEHLDHTLFYGPPGLGKTTLAKIISNEIGGNFKSTSGPAILKVADLAAILTNLERNDVLFIDEIHRLNTAVEEVLYPAMEDFELDIIIGEGSAARSVKITLPKFTLIGATTRLGLLSNPLRDRFGIPMRLNFYNTEELKKVLNRASKLLDIDLTDSGSEEIAKRSRGTPRIALRLLRRIRDFAAVDGKSRVDKEISDFGLNRLEVDRIGLDSNDYRYLKFIADNYNGGPVGIETIAAALSEQRDALEETIEPYLIQIGLLQRTPRGRVITIAAFEHLKMPVPNQSHHQFNIFNEHE</sequence>
<name>RUVB_RICM5</name>
<evidence type="ECO:0000255" key="1">
    <source>
        <dbReference type="HAMAP-Rule" id="MF_00016"/>
    </source>
</evidence>
<gene>
    <name evidence="1" type="primary">ruvB</name>
    <name type="ordered locus">RMA_0550</name>
</gene>
<keyword id="KW-0067">ATP-binding</keyword>
<keyword id="KW-0963">Cytoplasm</keyword>
<keyword id="KW-0227">DNA damage</keyword>
<keyword id="KW-0233">DNA recombination</keyword>
<keyword id="KW-0234">DNA repair</keyword>
<keyword id="KW-0238">DNA-binding</keyword>
<keyword id="KW-0378">Hydrolase</keyword>
<keyword id="KW-0547">Nucleotide-binding</keyword>
<accession>A8F1F7</accession>